<protein>
    <recommendedName>
        <fullName evidence="1">Redox-sensing transcriptional repressor Rex</fullName>
    </recommendedName>
</protein>
<gene>
    <name evidence="1" type="primary">rex</name>
    <name type="ordered locus">Swol_1645</name>
</gene>
<organism>
    <name type="scientific">Syntrophomonas wolfei subsp. wolfei (strain DSM 2245B / Goettingen)</name>
    <dbReference type="NCBI Taxonomy" id="335541"/>
    <lineage>
        <taxon>Bacteria</taxon>
        <taxon>Bacillati</taxon>
        <taxon>Bacillota</taxon>
        <taxon>Clostridia</taxon>
        <taxon>Eubacteriales</taxon>
        <taxon>Syntrophomonadaceae</taxon>
        <taxon>Syntrophomonas</taxon>
    </lineage>
</organism>
<name>REX_SYNWW</name>
<dbReference type="EMBL" id="CP000448">
    <property type="protein sequence ID" value="ABI68944.1"/>
    <property type="molecule type" value="Genomic_DNA"/>
</dbReference>
<dbReference type="RefSeq" id="WP_011641042.1">
    <property type="nucleotide sequence ID" value="NC_008346.1"/>
</dbReference>
<dbReference type="SMR" id="Q0AWG0"/>
<dbReference type="STRING" id="335541.Swol_1645"/>
<dbReference type="KEGG" id="swo:Swol_1645"/>
<dbReference type="eggNOG" id="COG2344">
    <property type="taxonomic scope" value="Bacteria"/>
</dbReference>
<dbReference type="HOGENOM" id="CLU_061534_0_1_9"/>
<dbReference type="OrthoDB" id="9784760at2"/>
<dbReference type="Proteomes" id="UP000001968">
    <property type="component" value="Chromosome"/>
</dbReference>
<dbReference type="GO" id="GO:0005737">
    <property type="term" value="C:cytoplasm"/>
    <property type="evidence" value="ECO:0007669"/>
    <property type="project" value="UniProtKB-SubCell"/>
</dbReference>
<dbReference type="GO" id="GO:0003677">
    <property type="term" value="F:DNA binding"/>
    <property type="evidence" value="ECO:0007669"/>
    <property type="project" value="UniProtKB-UniRule"/>
</dbReference>
<dbReference type="GO" id="GO:0003700">
    <property type="term" value="F:DNA-binding transcription factor activity"/>
    <property type="evidence" value="ECO:0007669"/>
    <property type="project" value="UniProtKB-UniRule"/>
</dbReference>
<dbReference type="GO" id="GO:0045892">
    <property type="term" value="P:negative regulation of DNA-templated transcription"/>
    <property type="evidence" value="ECO:0007669"/>
    <property type="project" value="InterPro"/>
</dbReference>
<dbReference type="GO" id="GO:0051775">
    <property type="term" value="P:response to redox state"/>
    <property type="evidence" value="ECO:0007669"/>
    <property type="project" value="InterPro"/>
</dbReference>
<dbReference type="Gene3D" id="3.40.50.720">
    <property type="entry name" value="NAD(P)-binding Rossmann-like Domain"/>
    <property type="match status" value="1"/>
</dbReference>
<dbReference type="Gene3D" id="1.10.10.10">
    <property type="entry name" value="Winged helix-like DNA-binding domain superfamily/Winged helix DNA-binding domain"/>
    <property type="match status" value="1"/>
</dbReference>
<dbReference type="HAMAP" id="MF_01131">
    <property type="entry name" value="Rex"/>
    <property type="match status" value="1"/>
</dbReference>
<dbReference type="InterPro" id="IPR003781">
    <property type="entry name" value="CoA-bd"/>
</dbReference>
<dbReference type="InterPro" id="IPR036291">
    <property type="entry name" value="NAD(P)-bd_dom_sf"/>
</dbReference>
<dbReference type="InterPro" id="IPR009718">
    <property type="entry name" value="Rex_DNA-bd_C_dom"/>
</dbReference>
<dbReference type="InterPro" id="IPR022876">
    <property type="entry name" value="Tscrpt_rep_Rex"/>
</dbReference>
<dbReference type="InterPro" id="IPR036388">
    <property type="entry name" value="WH-like_DNA-bd_sf"/>
</dbReference>
<dbReference type="InterPro" id="IPR036390">
    <property type="entry name" value="WH_DNA-bd_sf"/>
</dbReference>
<dbReference type="NCBIfam" id="NF003989">
    <property type="entry name" value="PRK05472.1-3"/>
    <property type="match status" value="1"/>
</dbReference>
<dbReference type="NCBIfam" id="NF003992">
    <property type="entry name" value="PRK05472.2-1"/>
    <property type="match status" value="1"/>
</dbReference>
<dbReference type="NCBIfam" id="NF003993">
    <property type="entry name" value="PRK05472.2-2"/>
    <property type="match status" value="1"/>
</dbReference>
<dbReference type="NCBIfam" id="NF003994">
    <property type="entry name" value="PRK05472.2-3"/>
    <property type="match status" value="1"/>
</dbReference>
<dbReference type="NCBIfam" id="NF003995">
    <property type="entry name" value="PRK05472.2-4"/>
    <property type="match status" value="1"/>
</dbReference>
<dbReference type="NCBIfam" id="NF003996">
    <property type="entry name" value="PRK05472.2-5"/>
    <property type="match status" value="1"/>
</dbReference>
<dbReference type="PANTHER" id="PTHR35786">
    <property type="entry name" value="REDOX-SENSING TRANSCRIPTIONAL REPRESSOR REX"/>
    <property type="match status" value="1"/>
</dbReference>
<dbReference type="PANTHER" id="PTHR35786:SF1">
    <property type="entry name" value="REDOX-SENSING TRANSCRIPTIONAL REPRESSOR REX 1"/>
    <property type="match status" value="1"/>
</dbReference>
<dbReference type="Pfam" id="PF02629">
    <property type="entry name" value="CoA_binding"/>
    <property type="match status" value="1"/>
</dbReference>
<dbReference type="Pfam" id="PF06971">
    <property type="entry name" value="Put_DNA-bind_N"/>
    <property type="match status" value="1"/>
</dbReference>
<dbReference type="SMART" id="SM00881">
    <property type="entry name" value="CoA_binding"/>
    <property type="match status" value="1"/>
</dbReference>
<dbReference type="SUPFAM" id="SSF51735">
    <property type="entry name" value="NAD(P)-binding Rossmann-fold domains"/>
    <property type="match status" value="1"/>
</dbReference>
<dbReference type="SUPFAM" id="SSF46785">
    <property type="entry name" value="Winged helix' DNA-binding domain"/>
    <property type="match status" value="1"/>
</dbReference>
<keyword id="KW-0963">Cytoplasm</keyword>
<keyword id="KW-0238">DNA-binding</keyword>
<keyword id="KW-0520">NAD</keyword>
<keyword id="KW-1185">Reference proteome</keyword>
<keyword id="KW-0678">Repressor</keyword>
<keyword id="KW-0804">Transcription</keyword>
<keyword id="KW-0805">Transcription regulation</keyword>
<sequence>MKVFKIPEATIMRLSIYSRYLRQLIEEGVETVSSGEIAAGVGVSSAQVRKDLAYFGEFGTRGVGYKVEDLYGCLLKILGLDRRWNIIIIGAGKLGSAFALYQGFLDRGFTISAIMDVDEKIIGSELDGVKIEPLELLQQRVTEKNITVGVITVPAPAAQDVTDLLVASGVKAILNFSPRVLKVPNDVILRNVDLSVNLELLSFYLALNNR</sequence>
<reference key="1">
    <citation type="journal article" date="2010" name="Environ. Microbiol.">
        <title>The genome of Syntrophomonas wolfei: new insights into syntrophic metabolism and biohydrogen production.</title>
        <authorList>
            <person name="Sieber J.R."/>
            <person name="Sims D.R."/>
            <person name="Han C."/>
            <person name="Kim E."/>
            <person name="Lykidis A."/>
            <person name="Lapidus A.L."/>
            <person name="McDonnald E."/>
            <person name="Rohlin L."/>
            <person name="Culley D.E."/>
            <person name="Gunsalus R."/>
            <person name="McInerney M.J."/>
        </authorList>
    </citation>
    <scope>NUCLEOTIDE SEQUENCE [LARGE SCALE GENOMIC DNA]</scope>
    <source>
        <strain>DSM 2245B / Goettingen</strain>
    </source>
</reference>
<accession>Q0AWG0</accession>
<evidence type="ECO:0000255" key="1">
    <source>
        <dbReference type="HAMAP-Rule" id="MF_01131"/>
    </source>
</evidence>
<proteinExistence type="inferred from homology"/>
<feature type="chain" id="PRO_1000213644" description="Redox-sensing transcriptional repressor Rex">
    <location>
        <begin position="1"/>
        <end position="210"/>
    </location>
</feature>
<feature type="DNA-binding region" description="H-T-H motif" evidence="1">
    <location>
        <begin position="16"/>
        <end position="55"/>
    </location>
</feature>
<feature type="binding site" evidence="1">
    <location>
        <begin position="90"/>
        <end position="95"/>
    </location>
    <ligand>
        <name>NAD(+)</name>
        <dbReference type="ChEBI" id="CHEBI:57540"/>
    </ligand>
</feature>
<comment type="function">
    <text evidence="1">Modulates transcription in response to changes in cellular NADH/NAD(+) redox state.</text>
</comment>
<comment type="subunit">
    <text evidence="1">Homodimer.</text>
</comment>
<comment type="subcellular location">
    <subcellularLocation>
        <location evidence="1">Cytoplasm</location>
    </subcellularLocation>
</comment>
<comment type="similarity">
    <text evidence="1">Belongs to the transcriptional regulatory Rex family.</text>
</comment>